<keyword id="KW-0004">4Fe-4S</keyword>
<keyword id="KW-0408">Iron</keyword>
<keyword id="KW-0411">Iron-sulfur</keyword>
<keyword id="KW-0479">Metal-binding</keyword>
<keyword id="KW-0560">Oxidoreductase</keyword>
<keyword id="KW-0949">S-adenosyl-L-methionine</keyword>
<organism>
    <name type="scientific">Clostridioides difficile (strain CD196)</name>
    <name type="common">Peptoclostridium difficile</name>
    <dbReference type="NCBI Taxonomy" id="645462"/>
    <lineage>
        <taxon>Bacteria</taxon>
        <taxon>Bacillati</taxon>
        <taxon>Bacillota</taxon>
        <taxon>Clostridia</taxon>
        <taxon>Peptostreptococcales</taxon>
        <taxon>Peptostreptococcaceae</taxon>
        <taxon>Clostridioides</taxon>
    </lineage>
</organism>
<reference key="1">
    <citation type="journal article" date="2009" name="Genome Biol.">
        <title>Comparative genome and phenotypic analysis of Clostridium difficile 027 strains provides insight into the evolution of a hypervirulent bacterium.</title>
        <authorList>
            <person name="Stabler R.A."/>
            <person name="He M."/>
            <person name="Dawson L."/>
            <person name="Martin M."/>
            <person name="Valiente E."/>
            <person name="Corton C."/>
            <person name="Lawley T.D."/>
            <person name="Sebaihia M."/>
            <person name="Quail M.A."/>
            <person name="Rose G."/>
            <person name="Gerding D.N."/>
            <person name="Gibert M."/>
            <person name="Popoff M.R."/>
            <person name="Parkhill J."/>
            <person name="Dougan G."/>
            <person name="Wren B.W."/>
        </authorList>
    </citation>
    <scope>NUCLEOTIDE SEQUENCE [LARGE SCALE GENOMIC DNA]</scope>
    <source>
        <strain>CD196</strain>
    </source>
</reference>
<sequence length="316" mass="36029">MSSQKQLEGMIFDVQSFSVHDGPGCRTTVFLNGCPLSCKWCANPESWTVRPHMMFSELSCQYENGCTVCHGKCKNGALSFNLDNKPVIDWNICKDCESFECVNSCYYNAFKLCAKPYTVDELVQVIKRDSNNWRSNGGVTFSGGEPLLQHEFLHEVLLKCHEVNIHTAIETSACVSNEVFNKIFKDIDFAFIDIKHMDREKHKEQTGVYNDLILENISNLANSDWNGRLVLRVPVISGFNDSAENISDIISFMHKNNLIEINLLPFHRLGESKWIQLGKEYEYSDKGDIDEEHLEELQDIFLDNGIACYVGHETAF</sequence>
<evidence type="ECO:0000250" key="1">
    <source>
        <dbReference type="UniProtKB" id="P0A9N4"/>
    </source>
</evidence>
<evidence type="ECO:0000250" key="2">
    <source>
        <dbReference type="UniProtKB" id="Q30W71"/>
    </source>
</evidence>
<evidence type="ECO:0000250" key="3">
    <source>
        <dbReference type="UniProtKB" id="Q46267"/>
    </source>
</evidence>
<evidence type="ECO:0000250" key="4">
    <source>
        <dbReference type="UniProtKB" id="Q84F14"/>
    </source>
</evidence>
<evidence type="ECO:0000255" key="5"/>
<evidence type="ECO:0000255" key="6">
    <source>
        <dbReference type="PROSITE-ProRule" id="PRU00711"/>
    </source>
</evidence>
<evidence type="ECO:0000255" key="7">
    <source>
        <dbReference type="PROSITE-ProRule" id="PRU01266"/>
    </source>
</evidence>
<evidence type="ECO:0000305" key="8"/>
<evidence type="ECO:0000312" key="9">
    <source>
        <dbReference type="EMBL" id="CBA60347.1"/>
    </source>
</evidence>
<name>HPDA_CLODC</name>
<accession>C9XIS7</accession>
<comment type="function">
    <text evidence="3 4">Catalyzes activation of 4-hydroxyphenylacetate decarboxylase under anaerobic conditions by generation of an organic free radical on a glycine residue, via a homolytic cleavage of S-adenosyl-L-methionine (SAM).</text>
</comment>
<comment type="catalytic activity">
    <reaction evidence="4">
        <text>glycyl-[protein] + reduced [flavodoxin] + S-adenosyl-L-methionine = glycin-2-yl radical-[protein] + semiquinone [flavodoxin] + 5'-deoxyadenosine + L-methionine + H(+)</text>
        <dbReference type="Rhea" id="RHEA:61976"/>
        <dbReference type="Rhea" id="RHEA-COMP:10622"/>
        <dbReference type="Rhea" id="RHEA-COMP:14480"/>
        <dbReference type="Rhea" id="RHEA-COMP:15993"/>
        <dbReference type="Rhea" id="RHEA-COMP:15994"/>
        <dbReference type="ChEBI" id="CHEBI:15378"/>
        <dbReference type="ChEBI" id="CHEBI:17319"/>
        <dbReference type="ChEBI" id="CHEBI:29947"/>
        <dbReference type="ChEBI" id="CHEBI:32722"/>
        <dbReference type="ChEBI" id="CHEBI:57618"/>
        <dbReference type="ChEBI" id="CHEBI:57844"/>
        <dbReference type="ChEBI" id="CHEBI:59789"/>
        <dbReference type="ChEBI" id="CHEBI:140311"/>
    </reaction>
</comment>
<comment type="cofactor">
    <cofactor evidence="4">
        <name>[4Fe-4S] cluster</name>
        <dbReference type="ChEBI" id="CHEBI:49883"/>
    </cofactor>
    <text evidence="4">Binds 2 [4Fe-4S] clusters. One cluster is coordinated with 3 cysteines and an exchangeable S-adenosyl-L-methionine.</text>
</comment>
<comment type="subunit">
    <text evidence="4">Monomer.</text>
</comment>
<comment type="similarity">
    <text evidence="5">Belongs to the organic radical-activating enzymes family.</text>
</comment>
<comment type="sequence caution" evidence="8">
    <conflict type="erroneous initiation">
        <sequence resource="EMBL-CDS" id="CBA60347"/>
    </conflict>
    <text>Extended N-terminus.</text>
</comment>
<dbReference type="EC" id="1.97.1.-" evidence="4"/>
<dbReference type="EMBL" id="FN538970">
    <property type="protein sequence ID" value="CBA60347.1"/>
    <property type="status" value="ALT_INIT"/>
    <property type="molecule type" value="Genomic_DNA"/>
</dbReference>
<dbReference type="RefSeq" id="WP_009888001.1">
    <property type="nucleotide sequence ID" value="NZ_CP059592.1"/>
</dbReference>
<dbReference type="SMR" id="C9XIS7"/>
<dbReference type="KEGG" id="cdc:CD196_0167"/>
<dbReference type="HOGENOM" id="CLU_058969_0_0_9"/>
<dbReference type="Proteomes" id="UP000002068">
    <property type="component" value="Chromosome"/>
</dbReference>
<dbReference type="GO" id="GO:0051539">
    <property type="term" value="F:4 iron, 4 sulfur cluster binding"/>
    <property type="evidence" value="ECO:0007669"/>
    <property type="project" value="UniProtKB-KW"/>
</dbReference>
<dbReference type="GO" id="GO:0046872">
    <property type="term" value="F:metal ion binding"/>
    <property type="evidence" value="ECO:0007669"/>
    <property type="project" value="UniProtKB-KW"/>
</dbReference>
<dbReference type="GO" id="GO:0016491">
    <property type="term" value="F:oxidoreductase activity"/>
    <property type="evidence" value="ECO:0007669"/>
    <property type="project" value="UniProtKB-KW"/>
</dbReference>
<dbReference type="Gene3D" id="3.20.20.70">
    <property type="entry name" value="Aldolase class I"/>
    <property type="match status" value="1"/>
</dbReference>
<dbReference type="InterPro" id="IPR034438">
    <property type="entry name" value="4-hPhe_decarboxylase_activase"/>
</dbReference>
<dbReference type="InterPro" id="IPR017896">
    <property type="entry name" value="4Fe4S_Fe-S-bd"/>
</dbReference>
<dbReference type="InterPro" id="IPR013785">
    <property type="entry name" value="Aldolase_TIM"/>
</dbReference>
<dbReference type="InterPro" id="IPR040074">
    <property type="entry name" value="BssD/PflA/YjjW"/>
</dbReference>
<dbReference type="InterPro" id="IPR034457">
    <property type="entry name" value="Organic_radical-activating"/>
</dbReference>
<dbReference type="InterPro" id="IPR012839">
    <property type="entry name" value="Organic_radical_activase"/>
</dbReference>
<dbReference type="InterPro" id="IPR001989">
    <property type="entry name" value="Radical_activat_CS"/>
</dbReference>
<dbReference type="InterPro" id="IPR007197">
    <property type="entry name" value="rSAM"/>
</dbReference>
<dbReference type="NCBIfam" id="NF033717">
    <property type="entry name" value="HPDL_rSAM_activ"/>
    <property type="match status" value="1"/>
</dbReference>
<dbReference type="NCBIfam" id="TIGR02494">
    <property type="entry name" value="PFLE_PFLC"/>
    <property type="match status" value="1"/>
</dbReference>
<dbReference type="PANTHER" id="PTHR30352:SF4">
    <property type="entry name" value="PYRUVATE FORMATE-LYASE 2-ACTIVATING ENZYME"/>
    <property type="match status" value="1"/>
</dbReference>
<dbReference type="PANTHER" id="PTHR30352">
    <property type="entry name" value="PYRUVATE FORMATE-LYASE-ACTIVATING ENZYME"/>
    <property type="match status" value="1"/>
</dbReference>
<dbReference type="Pfam" id="PF13353">
    <property type="entry name" value="Fer4_12"/>
    <property type="match status" value="1"/>
</dbReference>
<dbReference type="Pfam" id="PF04055">
    <property type="entry name" value="Radical_SAM"/>
    <property type="match status" value="1"/>
</dbReference>
<dbReference type="PIRSF" id="PIRSF000371">
    <property type="entry name" value="PFL_act_enz"/>
    <property type="match status" value="1"/>
</dbReference>
<dbReference type="SFLD" id="SFLDF00279">
    <property type="entry name" value="4-hydroxyphenylacetate_decarbo"/>
    <property type="match status" value="1"/>
</dbReference>
<dbReference type="SFLD" id="SFLDG01118">
    <property type="entry name" value="activating_enzymes__group_2"/>
    <property type="match status" value="1"/>
</dbReference>
<dbReference type="SFLD" id="SFLDG01066">
    <property type="entry name" value="organic_radical-activating_enz"/>
    <property type="match status" value="1"/>
</dbReference>
<dbReference type="SUPFAM" id="SSF54862">
    <property type="entry name" value="4Fe-4S ferredoxins"/>
    <property type="match status" value="1"/>
</dbReference>
<dbReference type="SUPFAM" id="SSF102114">
    <property type="entry name" value="Radical SAM enzymes"/>
    <property type="match status" value="1"/>
</dbReference>
<dbReference type="PROSITE" id="PS51379">
    <property type="entry name" value="4FE4S_FER_2"/>
    <property type="match status" value="1"/>
</dbReference>
<dbReference type="PROSITE" id="PS01087">
    <property type="entry name" value="RADICAL_ACTIVATING"/>
    <property type="match status" value="1"/>
</dbReference>
<dbReference type="PROSITE" id="PS51918">
    <property type="entry name" value="RADICAL_SAM"/>
    <property type="match status" value="1"/>
</dbReference>
<feature type="chain" id="PRO_0000403684" description="4-hydroxyphenylacetate decarboxylase activating enzyme">
    <location>
        <begin position="1"/>
        <end position="316"/>
    </location>
</feature>
<feature type="domain" description="Radical SAM core" evidence="7">
    <location>
        <begin position="20"/>
        <end position="307"/>
    </location>
</feature>
<feature type="domain" description="4Fe-4S ferredoxin-type" evidence="6">
    <location>
        <begin position="84"/>
        <end position="115"/>
    </location>
</feature>
<feature type="binding site" evidence="1">
    <location>
        <position position="34"/>
    </location>
    <ligand>
        <name>[4Fe-4S] cluster</name>
        <dbReference type="ChEBI" id="CHEBI:49883"/>
        <label>1</label>
        <note>4Fe-4S-S-AdoMet</note>
    </ligand>
</feature>
<feature type="binding site" evidence="1">
    <location>
        <position position="38"/>
    </location>
    <ligand>
        <name>[4Fe-4S] cluster</name>
        <dbReference type="ChEBI" id="CHEBI:49883"/>
        <label>1</label>
        <note>4Fe-4S-S-AdoMet</note>
    </ligand>
</feature>
<feature type="binding site" evidence="1">
    <location>
        <begin position="40"/>
        <end position="42"/>
    </location>
    <ligand>
        <name>S-adenosyl-L-methionine</name>
        <dbReference type="ChEBI" id="CHEBI:59789"/>
    </ligand>
</feature>
<feature type="binding site" evidence="1">
    <location>
        <position position="41"/>
    </location>
    <ligand>
        <name>[4Fe-4S] cluster</name>
        <dbReference type="ChEBI" id="CHEBI:49883"/>
        <label>1</label>
        <note>4Fe-4S-S-AdoMet</note>
    </ligand>
</feature>
<feature type="binding site" evidence="2">
    <location>
        <position position="60"/>
    </location>
    <ligand>
        <name>[4Fe-4S] cluster</name>
        <dbReference type="ChEBI" id="CHEBI:49883"/>
        <label>2</label>
    </ligand>
</feature>
<feature type="binding site" evidence="2">
    <location>
        <position position="66"/>
    </location>
    <ligand>
        <name>[4Fe-4S] cluster</name>
        <dbReference type="ChEBI" id="CHEBI:49883"/>
        <label>2</label>
    </ligand>
</feature>
<feature type="binding site" evidence="2">
    <location>
        <position position="69"/>
    </location>
    <ligand>
        <name>[4Fe-4S] cluster</name>
        <dbReference type="ChEBI" id="CHEBI:49883"/>
        <label>2</label>
    </ligand>
</feature>
<feature type="binding site" evidence="2">
    <location>
        <position position="105"/>
    </location>
    <ligand>
        <name>[4Fe-4S] cluster</name>
        <dbReference type="ChEBI" id="CHEBI:49883"/>
        <label>2</label>
    </ligand>
</feature>
<feature type="binding site" evidence="1">
    <location>
        <position position="144"/>
    </location>
    <ligand>
        <name>S-adenosyl-L-methionine</name>
        <dbReference type="ChEBI" id="CHEBI:59789"/>
    </ligand>
</feature>
<feature type="binding site" evidence="1">
    <location>
        <begin position="193"/>
        <end position="195"/>
    </location>
    <ligand>
        <name>S-adenosyl-L-methionine</name>
        <dbReference type="ChEBI" id="CHEBI:59789"/>
    </ligand>
</feature>
<feature type="binding site" evidence="1">
    <location>
        <position position="267"/>
    </location>
    <ligand>
        <name>S-adenosyl-L-methionine</name>
        <dbReference type="ChEBI" id="CHEBI:59789"/>
    </ligand>
</feature>
<gene>
    <name evidence="9" type="primary">hpdA</name>
    <name type="ordered locus">CD196_0167</name>
</gene>
<proteinExistence type="inferred from homology"/>
<protein>
    <recommendedName>
        <fullName evidence="4">4-hydroxyphenylacetate decarboxylase activating enzyme</fullName>
        <shortName evidence="4">Hpd-AE</shortName>
        <ecNumber evidence="4">1.97.1.-</ecNumber>
    </recommendedName>
</protein>